<gene>
    <name type="ordered locus">MJECL23</name>
</gene>
<name>Y3523_METJA</name>
<proteinExistence type="predicted"/>
<accession>Q60282</accession>
<protein>
    <recommendedName>
        <fullName>Uncharacterized protein MJECL23</fullName>
    </recommendedName>
</protein>
<dbReference type="EMBL" id="L77118">
    <property type="protein sequence ID" value="AAC37094.1"/>
    <property type="molecule type" value="Genomic_DNA"/>
</dbReference>
<dbReference type="PIR" id="F64512">
    <property type="entry name" value="F64512"/>
</dbReference>
<dbReference type="SMR" id="Q60282"/>
<dbReference type="PaxDb" id="243232-MJ_ECL23"/>
<dbReference type="EnsemblBacteria" id="AAC37094">
    <property type="protein sequence ID" value="AAC37094"/>
    <property type="gene ID" value="MJ_ECL23"/>
</dbReference>
<dbReference type="KEGG" id="mja:MJ_ECL23"/>
<dbReference type="eggNOG" id="arCOG02556">
    <property type="taxonomic scope" value="Archaea"/>
</dbReference>
<dbReference type="HOGENOM" id="CLU_382046_0_0_2"/>
<dbReference type="InParanoid" id="Q60282"/>
<dbReference type="OrthoDB" id="145878at2157"/>
<dbReference type="Proteomes" id="UP000000805">
    <property type="component" value="Plasmid pDSM2661_1"/>
</dbReference>
<dbReference type="Gene3D" id="2.40.128.630">
    <property type="match status" value="1"/>
</dbReference>
<dbReference type="Gene3D" id="2.130.10.10">
    <property type="entry name" value="YVTN repeat-like/Quinoprotein amine dehydrogenase"/>
    <property type="match status" value="2"/>
</dbReference>
<dbReference type="InterPro" id="IPR018391">
    <property type="entry name" value="PQQ_b-propeller_rpt"/>
</dbReference>
<dbReference type="InterPro" id="IPR002372">
    <property type="entry name" value="PQQ_rpt_dom"/>
</dbReference>
<dbReference type="InterPro" id="IPR011047">
    <property type="entry name" value="Quinoprotein_ADH-like_sf"/>
</dbReference>
<dbReference type="InterPro" id="IPR015943">
    <property type="entry name" value="WD40/YVTN_repeat-like_dom_sf"/>
</dbReference>
<dbReference type="PANTHER" id="PTHR34512">
    <property type="entry name" value="CELL SURFACE PROTEIN"/>
    <property type="match status" value="1"/>
</dbReference>
<dbReference type="PANTHER" id="PTHR34512:SF30">
    <property type="entry name" value="OUTER MEMBRANE PROTEIN ASSEMBLY FACTOR BAMB"/>
    <property type="match status" value="1"/>
</dbReference>
<dbReference type="Pfam" id="PF13360">
    <property type="entry name" value="PQQ_2"/>
    <property type="match status" value="2"/>
</dbReference>
<dbReference type="SMART" id="SM00564">
    <property type="entry name" value="PQQ"/>
    <property type="match status" value="13"/>
</dbReference>
<dbReference type="SUPFAM" id="SSF50998">
    <property type="entry name" value="Quinoprotein alcohol dehydrogenase-like"/>
    <property type="match status" value="2"/>
</dbReference>
<reference key="1">
    <citation type="journal article" date="1996" name="Science">
        <title>Complete genome sequence of the methanogenic archaeon, Methanococcus jannaschii.</title>
        <authorList>
            <person name="Bult C.J."/>
            <person name="White O."/>
            <person name="Olsen G.J."/>
            <person name="Zhou L."/>
            <person name="Fleischmann R.D."/>
            <person name="Sutton G.G."/>
            <person name="Blake J.A."/>
            <person name="FitzGerald L.M."/>
            <person name="Clayton R.A."/>
            <person name="Gocayne J.D."/>
            <person name="Kerlavage A.R."/>
            <person name="Dougherty B.A."/>
            <person name="Tomb J.-F."/>
            <person name="Adams M.D."/>
            <person name="Reich C.I."/>
            <person name="Overbeek R."/>
            <person name="Kirkness E.F."/>
            <person name="Weinstock K.G."/>
            <person name="Merrick J.M."/>
            <person name="Glodek A."/>
            <person name="Scott J.L."/>
            <person name="Geoghagen N.S.M."/>
            <person name="Weidman J.F."/>
            <person name="Fuhrmann J.L."/>
            <person name="Nguyen D."/>
            <person name="Utterback T.R."/>
            <person name="Kelley J.M."/>
            <person name="Peterson J.D."/>
            <person name="Sadow P.W."/>
            <person name="Hanna M.C."/>
            <person name="Cotton M.D."/>
            <person name="Roberts K.M."/>
            <person name="Hurst M.A."/>
            <person name="Kaine B.P."/>
            <person name="Borodovsky M."/>
            <person name="Klenk H.-P."/>
            <person name="Fraser C.M."/>
            <person name="Smith H.O."/>
            <person name="Woese C.R."/>
            <person name="Venter J.C."/>
        </authorList>
    </citation>
    <scope>NUCLEOTIDE SEQUENCE [LARGE SCALE GENOMIC DNA]</scope>
    <source>
        <strain>ATCC 43067 / DSM 2661 / JAL-1 / JCM 10045 / NBRC 100440</strain>
    </source>
</reference>
<keyword id="KW-0614">Plasmid</keyword>
<keyword id="KW-1185">Reference proteome</keyword>
<sequence>MVMRMVFVENKINGVENIRQEIDNLNVSNYKEIYDKFKNVFSKNRDIFNYYVDKLIELMKNLDDNELSLEIDKFMLCILKDSIIWEFKAGGSVWDLSIKDIKDNIIILGCSNHLFALDIKTGNKIWEYKVEHNVDSLFIKDNIVMLEYRGGHVCVLDVMTGDKIWESKVGERMWGFSLKDNIVILGDGDKYIYAIDVRTGGKLWEFEAEWCVWELSIKDDKIILRCEDEYGCEYFYVLDIKTGEKILEFGGEWHVSDLLISGDVTILADMWGCVYALDTNLYSKIQRVRPQLTNIMKEIVKIDLTLLKKSLNLNEWDELPIQITNKSLKDITISKISIINEEDILFKDIEPIKIRGRDTKVINLFINPKVKGKLPIDIVVEFEDEFNIRYKERFTEVLTITKFKGDNVDDMRPEKIDKILKQEIDNLNTSNYKEIYSRFKNIFNENRAVFNYYMNKLIELVNNSNDELAINVGKFILDILGIKRVDELLWEFRAEGGVRLLSIKGDIVILGCVSGHVYAIDIKTGKKLWEFKAEDTVWGLSIKDDIVVLGCGNIFESIVMLKNGKILEEGYAYALDINTGREIWRSKIKHDVRSLSIKDDIVVLGCKKGYILALDINAGNMLWEFKAKSGKSIRNLSIKNDILLFGCDNYLYALDIDTGRELWRFKAEGEVKSLSIKKDNVLLGCRGGYVYLLDINTGEKMERFKVVGSVLRLSIKDDIVILGCNRECVYALDINAGENLWAFKTDGDVNGLSIKNDAVLLGCDNYLYALDINTGEEIWKFKTESAVLDLSIKDNIVISGCKRGHVYALDFNIIKNYSIIQKIKQVL</sequence>
<organism>
    <name type="scientific">Methanocaldococcus jannaschii (strain ATCC 43067 / DSM 2661 / JAL-1 / JCM 10045 / NBRC 100440)</name>
    <name type="common">Methanococcus jannaschii</name>
    <dbReference type="NCBI Taxonomy" id="243232"/>
    <lineage>
        <taxon>Archaea</taxon>
        <taxon>Methanobacteriati</taxon>
        <taxon>Methanobacteriota</taxon>
        <taxon>Methanomada group</taxon>
        <taxon>Methanococci</taxon>
        <taxon>Methanococcales</taxon>
        <taxon>Methanocaldococcaceae</taxon>
        <taxon>Methanocaldococcus</taxon>
    </lineage>
</organism>
<geneLocation type="plasmid">
    <name>large ECE</name>
</geneLocation>
<feature type="chain" id="PRO_0000107511" description="Uncharacterized protein MJECL23">
    <location>
        <begin position="1"/>
        <end position="827"/>
    </location>
</feature>